<dbReference type="EC" id="6.3.4.5" evidence="1"/>
<dbReference type="EMBL" id="AP009493">
    <property type="protein sequence ID" value="BAG22795.1"/>
    <property type="molecule type" value="Genomic_DNA"/>
</dbReference>
<dbReference type="RefSeq" id="WP_003970274.1">
    <property type="nucleotide sequence ID" value="NC_010572.1"/>
</dbReference>
<dbReference type="SMR" id="B1W3B3"/>
<dbReference type="KEGG" id="sgr:SGR_5966"/>
<dbReference type="eggNOG" id="COG0137">
    <property type="taxonomic scope" value="Bacteria"/>
</dbReference>
<dbReference type="HOGENOM" id="CLU_032784_4_2_11"/>
<dbReference type="UniPathway" id="UPA00068">
    <property type="reaction ID" value="UER00113"/>
</dbReference>
<dbReference type="Proteomes" id="UP000001685">
    <property type="component" value="Chromosome"/>
</dbReference>
<dbReference type="GO" id="GO:0005737">
    <property type="term" value="C:cytoplasm"/>
    <property type="evidence" value="ECO:0007669"/>
    <property type="project" value="UniProtKB-SubCell"/>
</dbReference>
<dbReference type="GO" id="GO:0004055">
    <property type="term" value="F:argininosuccinate synthase activity"/>
    <property type="evidence" value="ECO:0007669"/>
    <property type="project" value="UniProtKB-UniRule"/>
</dbReference>
<dbReference type="GO" id="GO:0005524">
    <property type="term" value="F:ATP binding"/>
    <property type="evidence" value="ECO:0007669"/>
    <property type="project" value="UniProtKB-UniRule"/>
</dbReference>
<dbReference type="GO" id="GO:0000053">
    <property type="term" value="P:argininosuccinate metabolic process"/>
    <property type="evidence" value="ECO:0007669"/>
    <property type="project" value="TreeGrafter"/>
</dbReference>
<dbReference type="GO" id="GO:0006526">
    <property type="term" value="P:L-arginine biosynthetic process"/>
    <property type="evidence" value="ECO:0007669"/>
    <property type="project" value="UniProtKB-UniRule"/>
</dbReference>
<dbReference type="GO" id="GO:0000050">
    <property type="term" value="P:urea cycle"/>
    <property type="evidence" value="ECO:0007669"/>
    <property type="project" value="TreeGrafter"/>
</dbReference>
<dbReference type="CDD" id="cd01999">
    <property type="entry name" value="ASS"/>
    <property type="match status" value="1"/>
</dbReference>
<dbReference type="FunFam" id="3.40.50.620:FF:000038">
    <property type="entry name" value="Argininosuccinate synthase"/>
    <property type="match status" value="1"/>
</dbReference>
<dbReference type="FunFam" id="3.90.1260.10:FF:000007">
    <property type="entry name" value="Argininosuccinate synthase"/>
    <property type="match status" value="1"/>
</dbReference>
<dbReference type="Gene3D" id="3.90.1260.10">
    <property type="entry name" value="Argininosuccinate synthetase, chain A, domain 2"/>
    <property type="match status" value="1"/>
</dbReference>
<dbReference type="Gene3D" id="3.40.50.620">
    <property type="entry name" value="HUPs"/>
    <property type="match status" value="1"/>
</dbReference>
<dbReference type="Gene3D" id="1.20.5.470">
    <property type="entry name" value="Single helix bin"/>
    <property type="match status" value="1"/>
</dbReference>
<dbReference type="HAMAP" id="MF_00005">
    <property type="entry name" value="Arg_succ_synth_type1"/>
    <property type="match status" value="1"/>
</dbReference>
<dbReference type="InterPro" id="IPR048268">
    <property type="entry name" value="Arginosuc_syn_C"/>
</dbReference>
<dbReference type="InterPro" id="IPR048267">
    <property type="entry name" value="Arginosuc_syn_N"/>
</dbReference>
<dbReference type="InterPro" id="IPR001518">
    <property type="entry name" value="Arginosuc_synth"/>
</dbReference>
<dbReference type="InterPro" id="IPR018223">
    <property type="entry name" value="Arginosuc_synth_CS"/>
</dbReference>
<dbReference type="InterPro" id="IPR023434">
    <property type="entry name" value="Arginosuc_synth_type_1_subfam"/>
</dbReference>
<dbReference type="InterPro" id="IPR024074">
    <property type="entry name" value="AS_cat/multimer_dom_body"/>
</dbReference>
<dbReference type="InterPro" id="IPR014729">
    <property type="entry name" value="Rossmann-like_a/b/a_fold"/>
</dbReference>
<dbReference type="NCBIfam" id="TIGR00032">
    <property type="entry name" value="argG"/>
    <property type="match status" value="1"/>
</dbReference>
<dbReference type="NCBIfam" id="NF001770">
    <property type="entry name" value="PRK00509.1"/>
    <property type="match status" value="1"/>
</dbReference>
<dbReference type="PANTHER" id="PTHR11587">
    <property type="entry name" value="ARGININOSUCCINATE SYNTHASE"/>
    <property type="match status" value="1"/>
</dbReference>
<dbReference type="PANTHER" id="PTHR11587:SF2">
    <property type="entry name" value="ARGININOSUCCINATE SYNTHASE"/>
    <property type="match status" value="1"/>
</dbReference>
<dbReference type="Pfam" id="PF20979">
    <property type="entry name" value="Arginosuc_syn_C"/>
    <property type="match status" value="1"/>
</dbReference>
<dbReference type="Pfam" id="PF00764">
    <property type="entry name" value="Arginosuc_synth"/>
    <property type="match status" value="1"/>
</dbReference>
<dbReference type="SUPFAM" id="SSF52402">
    <property type="entry name" value="Adenine nucleotide alpha hydrolases-like"/>
    <property type="match status" value="1"/>
</dbReference>
<dbReference type="SUPFAM" id="SSF69864">
    <property type="entry name" value="Argininosuccinate synthetase, C-terminal domain"/>
    <property type="match status" value="1"/>
</dbReference>
<dbReference type="PROSITE" id="PS00564">
    <property type="entry name" value="ARGININOSUCCIN_SYN_1"/>
    <property type="match status" value="1"/>
</dbReference>
<dbReference type="PROSITE" id="PS00565">
    <property type="entry name" value="ARGININOSUCCIN_SYN_2"/>
    <property type="match status" value="1"/>
</dbReference>
<organism>
    <name type="scientific">Streptomyces griseus subsp. griseus (strain JCM 4626 / CBS 651.72 / NBRC 13350 / KCC S-0626 / ISP 5235)</name>
    <dbReference type="NCBI Taxonomy" id="455632"/>
    <lineage>
        <taxon>Bacteria</taxon>
        <taxon>Bacillati</taxon>
        <taxon>Actinomycetota</taxon>
        <taxon>Actinomycetes</taxon>
        <taxon>Kitasatosporales</taxon>
        <taxon>Streptomycetaceae</taxon>
        <taxon>Streptomyces</taxon>
    </lineage>
</organism>
<keyword id="KW-0028">Amino-acid biosynthesis</keyword>
<keyword id="KW-0055">Arginine biosynthesis</keyword>
<keyword id="KW-0067">ATP-binding</keyword>
<keyword id="KW-0963">Cytoplasm</keyword>
<keyword id="KW-0436">Ligase</keyword>
<keyword id="KW-0547">Nucleotide-binding</keyword>
<feature type="chain" id="PRO_1000089054" description="Argininosuccinate synthase">
    <location>
        <begin position="1"/>
        <end position="397"/>
    </location>
</feature>
<feature type="binding site" evidence="1">
    <location>
        <begin position="8"/>
        <end position="16"/>
    </location>
    <ligand>
        <name>ATP</name>
        <dbReference type="ChEBI" id="CHEBI:30616"/>
    </ligand>
</feature>
<feature type="binding site" evidence="1">
    <location>
        <position position="87"/>
    </location>
    <ligand>
        <name>L-citrulline</name>
        <dbReference type="ChEBI" id="CHEBI:57743"/>
    </ligand>
</feature>
<feature type="binding site" evidence="1">
    <location>
        <position position="117"/>
    </location>
    <ligand>
        <name>ATP</name>
        <dbReference type="ChEBI" id="CHEBI:30616"/>
    </ligand>
</feature>
<feature type="binding site" evidence="1">
    <location>
        <position position="119"/>
    </location>
    <ligand>
        <name>L-aspartate</name>
        <dbReference type="ChEBI" id="CHEBI:29991"/>
    </ligand>
</feature>
<feature type="binding site" evidence="1">
    <location>
        <position position="123"/>
    </location>
    <ligand>
        <name>L-aspartate</name>
        <dbReference type="ChEBI" id="CHEBI:29991"/>
    </ligand>
</feature>
<feature type="binding site" evidence="1">
    <location>
        <position position="123"/>
    </location>
    <ligand>
        <name>L-citrulline</name>
        <dbReference type="ChEBI" id="CHEBI:57743"/>
    </ligand>
</feature>
<feature type="binding site" evidence="1">
    <location>
        <position position="124"/>
    </location>
    <ligand>
        <name>L-aspartate</name>
        <dbReference type="ChEBI" id="CHEBI:29991"/>
    </ligand>
</feature>
<feature type="binding site" evidence="1">
    <location>
        <position position="127"/>
    </location>
    <ligand>
        <name>L-citrulline</name>
        <dbReference type="ChEBI" id="CHEBI:57743"/>
    </ligand>
</feature>
<feature type="binding site" evidence="1">
    <location>
        <position position="175"/>
    </location>
    <ligand>
        <name>L-citrulline</name>
        <dbReference type="ChEBI" id="CHEBI:57743"/>
    </ligand>
</feature>
<feature type="binding site" evidence="1">
    <location>
        <position position="259"/>
    </location>
    <ligand>
        <name>L-citrulline</name>
        <dbReference type="ChEBI" id="CHEBI:57743"/>
    </ligand>
</feature>
<feature type="binding site" evidence="1">
    <location>
        <position position="271"/>
    </location>
    <ligand>
        <name>L-citrulline</name>
        <dbReference type="ChEBI" id="CHEBI:57743"/>
    </ligand>
</feature>
<accession>B1W3B3</accession>
<proteinExistence type="inferred from homology"/>
<comment type="catalytic activity">
    <reaction evidence="1">
        <text>L-citrulline + L-aspartate + ATP = 2-(N(omega)-L-arginino)succinate + AMP + diphosphate + H(+)</text>
        <dbReference type="Rhea" id="RHEA:10932"/>
        <dbReference type="ChEBI" id="CHEBI:15378"/>
        <dbReference type="ChEBI" id="CHEBI:29991"/>
        <dbReference type="ChEBI" id="CHEBI:30616"/>
        <dbReference type="ChEBI" id="CHEBI:33019"/>
        <dbReference type="ChEBI" id="CHEBI:57472"/>
        <dbReference type="ChEBI" id="CHEBI:57743"/>
        <dbReference type="ChEBI" id="CHEBI:456215"/>
        <dbReference type="EC" id="6.3.4.5"/>
    </reaction>
</comment>
<comment type="pathway">
    <text evidence="1">Amino-acid biosynthesis; L-arginine biosynthesis; L-arginine from L-ornithine and carbamoyl phosphate: step 2/3.</text>
</comment>
<comment type="subunit">
    <text evidence="1">Homotetramer.</text>
</comment>
<comment type="subcellular location">
    <subcellularLocation>
        <location evidence="1">Cytoplasm</location>
    </subcellularLocation>
</comment>
<comment type="similarity">
    <text evidence="1">Belongs to the argininosuccinate synthase family. Type 1 subfamily.</text>
</comment>
<name>ASSY_STRGG</name>
<gene>
    <name evidence="1" type="primary">argG</name>
    <name type="ordered locus">SGR_5966</name>
</gene>
<protein>
    <recommendedName>
        <fullName evidence="1">Argininosuccinate synthase</fullName>
        <ecNumber evidence="1">6.3.4.5</ecNumber>
    </recommendedName>
    <alternativeName>
        <fullName evidence="1">Citrulline--aspartate ligase</fullName>
    </alternativeName>
</protein>
<evidence type="ECO:0000255" key="1">
    <source>
        <dbReference type="HAMAP-Rule" id="MF_00005"/>
    </source>
</evidence>
<reference key="1">
    <citation type="journal article" date="2008" name="J. Bacteriol.">
        <title>Genome sequence of the streptomycin-producing microorganism Streptomyces griseus IFO 13350.</title>
        <authorList>
            <person name="Ohnishi Y."/>
            <person name="Ishikawa J."/>
            <person name="Hara H."/>
            <person name="Suzuki H."/>
            <person name="Ikenoya M."/>
            <person name="Ikeda H."/>
            <person name="Yamashita A."/>
            <person name="Hattori M."/>
            <person name="Horinouchi S."/>
        </authorList>
    </citation>
    <scope>NUCLEOTIDE SEQUENCE [LARGE SCALE GENOMIC DNA]</scope>
    <source>
        <strain>JCM 4626 / CBS 651.72 / NBRC 13350 / KCC S-0626 / ISP 5235</strain>
    </source>
</reference>
<sequence>MTERVVLAYSGGLDTSVAIGWIAEETGAEVIAVAVDVGQGGEDLDVIRKRALACGAVEAEVADARDEFAEEYCLPAIKANALYMDRYPLVSALSRPTIVKHLVAAARKHGAGTVAHGCTGKGNDQVRFEAGISALGPDLKCIAPVRDYAMTRDRAIAFCEEKNLPIATTRKSPYSIDQNVFGRAVETGFLEDIWNAPIEDIYEYTADPAVPREADEVVISFKEGVPVAVDGRPVTVLQAIQQLNERAGAQGVGRIDMVEDRLVGIKSREVYEAPGAIALITAHQELENVTVERELARYKRQVEQRWGEMVYDGLWFSPLKRALDGFINEANQHVTGDIRMTLHAGRAVVTGRKSEESLYDFNLATYDSGDTFDQSKAQGFIEIFGLSAKIAARRDLA</sequence>